<feature type="chain" id="PRO_0000256772" description="UPF0391 membrane protein msr4317">
    <location>
        <begin position="1"/>
        <end position="53"/>
    </location>
</feature>
<feature type="transmembrane region" description="Helical" evidence="1">
    <location>
        <begin position="4"/>
        <end position="24"/>
    </location>
</feature>
<feature type="transmembrane region" description="Helical" evidence="1">
    <location>
        <begin position="33"/>
        <end position="53"/>
    </location>
</feature>
<keyword id="KW-1003">Cell membrane</keyword>
<keyword id="KW-0472">Membrane</keyword>
<keyword id="KW-0812">Transmembrane</keyword>
<keyword id="KW-1133">Transmembrane helix</keyword>
<dbReference type="EMBL" id="BA000012">
    <property type="protein sequence ID" value="BAB51003.1"/>
    <property type="molecule type" value="Genomic_DNA"/>
</dbReference>
<dbReference type="RefSeq" id="WP_010912345.1">
    <property type="nucleotide sequence ID" value="NC_002678.2"/>
</dbReference>
<dbReference type="KEGG" id="mlo:msr4317"/>
<dbReference type="eggNOG" id="ENOG5033EG9">
    <property type="taxonomic scope" value="Bacteria"/>
</dbReference>
<dbReference type="HOGENOM" id="CLU_187346_4_0_5"/>
<dbReference type="Proteomes" id="UP000000552">
    <property type="component" value="Chromosome"/>
</dbReference>
<dbReference type="GO" id="GO:0005886">
    <property type="term" value="C:plasma membrane"/>
    <property type="evidence" value="ECO:0007669"/>
    <property type="project" value="UniProtKB-SubCell"/>
</dbReference>
<dbReference type="HAMAP" id="MF_01361">
    <property type="entry name" value="UPF0391"/>
    <property type="match status" value="1"/>
</dbReference>
<dbReference type="InterPro" id="IPR009760">
    <property type="entry name" value="DUF1328"/>
</dbReference>
<dbReference type="PIRSF" id="PIRSF036466">
    <property type="entry name" value="UCP036466"/>
    <property type="match status" value="1"/>
</dbReference>
<protein>
    <recommendedName>
        <fullName evidence="1">UPF0391 membrane protein msr4317</fullName>
    </recommendedName>
</protein>
<proteinExistence type="inferred from homology"/>
<gene>
    <name type="ordered locus">msr4317</name>
</gene>
<organism>
    <name type="scientific">Mesorhizobium japonicum (strain LMG 29417 / CECT 9101 / MAFF 303099)</name>
    <name type="common">Mesorhizobium loti (strain MAFF 303099)</name>
    <dbReference type="NCBI Taxonomy" id="266835"/>
    <lineage>
        <taxon>Bacteria</taxon>
        <taxon>Pseudomonadati</taxon>
        <taxon>Pseudomonadota</taxon>
        <taxon>Alphaproteobacteria</taxon>
        <taxon>Hyphomicrobiales</taxon>
        <taxon>Phyllobacteriaceae</taxon>
        <taxon>Mesorhizobium</taxon>
    </lineage>
</organism>
<sequence>MIKWIIILLIVAAAASLLGMPALAGAAATGARILIGIVLVIFLLVVLGIFAVT</sequence>
<accession>Q98EB7</accession>
<reference key="1">
    <citation type="journal article" date="2000" name="DNA Res.">
        <title>Complete genome structure of the nitrogen-fixing symbiotic bacterium Mesorhizobium loti.</title>
        <authorList>
            <person name="Kaneko T."/>
            <person name="Nakamura Y."/>
            <person name="Sato S."/>
            <person name="Asamizu E."/>
            <person name="Kato T."/>
            <person name="Sasamoto S."/>
            <person name="Watanabe A."/>
            <person name="Idesawa K."/>
            <person name="Ishikawa A."/>
            <person name="Kawashima K."/>
            <person name="Kimura T."/>
            <person name="Kishida Y."/>
            <person name="Kiyokawa C."/>
            <person name="Kohara M."/>
            <person name="Matsumoto M."/>
            <person name="Matsuno A."/>
            <person name="Mochizuki Y."/>
            <person name="Nakayama S."/>
            <person name="Nakazaki N."/>
            <person name="Shimpo S."/>
            <person name="Sugimoto M."/>
            <person name="Takeuchi C."/>
            <person name="Yamada M."/>
            <person name="Tabata S."/>
        </authorList>
    </citation>
    <scope>NUCLEOTIDE SEQUENCE [LARGE SCALE GENOMIC DNA]</scope>
    <source>
        <strain>LMG 29417 / CECT 9101 / MAFF 303099</strain>
    </source>
</reference>
<comment type="subcellular location">
    <subcellularLocation>
        <location evidence="1">Cell membrane</location>
        <topology evidence="1">Multi-pass membrane protein</topology>
    </subcellularLocation>
</comment>
<comment type="similarity">
    <text evidence="1">Belongs to the UPF0391 family.</text>
</comment>
<evidence type="ECO:0000255" key="1">
    <source>
        <dbReference type="HAMAP-Rule" id="MF_01361"/>
    </source>
</evidence>
<name>Y4317_RHILO</name>